<evidence type="ECO:0000255" key="1">
    <source>
        <dbReference type="HAMAP-Rule" id="MF_01521"/>
    </source>
</evidence>
<reference key="1">
    <citation type="journal article" date="2002" name="Proc. Natl. Acad. Sci. U.S.A.">
        <title>Complete genome sequence of Clostridium perfringens, an anaerobic flesh-eater.</title>
        <authorList>
            <person name="Shimizu T."/>
            <person name="Ohtani K."/>
            <person name="Hirakawa H."/>
            <person name="Ohshima K."/>
            <person name="Yamashita A."/>
            <person name="Shiba T."/>
            <person name="Ogasawara N."/>
            <person name="Hattori M."/>
            <person name="Kuhara S."/>
            <person name="Hayashi H."/>
        </authorList>
    </citation>
    <scope>NUCLEOTIDE SEQUENCE [LARGE SCALE GENOMIC DNA]</scope>
    <source>
        <strain>13 / Type A</strain>
    </source>
</reference>
<organism>
    <name type="scientific">Clostridium perfringens (strain 13 / Type A)</name>
    <dbReference type="NCBI Taxonomy" id="195102"/>
    <lineage>
        <taxon>Bacteria</taxon>
        <taxon>Bacillati</taxon>
        <taxon>Bacillota</taxon>
        <taxon>Clostridia</taxon>
        <taxon>Eubacteriales</taxon>
        <taxon>Clostridiaceae</taxon>
        <taxon>Clostridium</taxon>
    </lineage>
</organism>
<accession>Q8XN03</accession>
<feature type="chain" id="PRO_0000155643" description="Putative manganese efflux pump MntP">
    <location>
        <begin position="1"/>
        <end position="213"/>
    </location>
</feature>
<feature type="transmembrane region" description="Helical" evidence="1">
    <location>
        <begin position="3"/>
        <end position="23"/>
    </location>
</feature>
<feature type="transmembrane region" description="Helical" evidence="1">
    <location>
        <begin position="36"/>
        <end position="56"/>
    </location>
</feature>
<feature type="transmembrane region" description="Helical" evidence="1">
    <location>
        <begin position="67"/>
        <end position="87"/>
    </location>
</feature>
<feature type="transmembrane region" description="Helical" evidence="1">
    <location>
        <begin position="130"/>
        <end position="150"/>
    </location>
</feature>
<feature type="transmembrane region" description="Helical" evidence="1">
    <location>
        <begin position="152"/>
        <end position="172"/>
    </location>
</feature>
<feature type="transmembrane region" description="Helical" evidence="1">
    <location>
        <begin position="187"/>
        <end position="207"/>
    </location>
</feature>
<proteinExistence type="inferred from homology"/>
<gene>
    <name evidence="1" type="primary">mntP</name>
    <name type="ordered locus">CPE0535</name>
</gene>
<comment type="function">
    <text evidence="1">Probably functions as a manganese efflux pump.</text>
</comment>
<comment type="subcellular location">
    <subcellularLocation>
        <location evidence="1">Cell membrane</location>
        <topology evidence="1">Multi-pass membrane protein</topology>
    </subcellularLocation>
</comment>
<comment type="similarity">
    <text evidence="1">Belongs to the MntP (TC 9.B.29) family.</text>
</comment>
<keyword id="KW-1003">Cell membrane</keyword>
<keyword id="KW-0406">Ion transport</keyword>
<keyword id="KW-0464">Manganese</keyword>
<keyword id="KW-0472">Membrane</keyword>
<keyword id="KW-1185">Reference proteome</keyword>
<keyword id="KW-0812">Transmembrane</keyword>
<keyword id="KW-1133">Transmembrane helix</keyword>
<keyword id="KW-0813">Transport</keyword>
<name>MNTP_CLOPE</name>
<dbReference type="EMBL" id="BA000016">
    <property type="protein sequence ID" value="BAB80241.1"/>
    <property type="molecule type" value="Genomic_DNA"/>
</dbReference>
<dbReference type="RefSeq" id="WP_003449996.1">
    <property type="nucleotide sequence ID" value="NC_003366.1"/>
</dbReference>
<dbReference type="KEGG" id="cpe:CPE0535"/>
<dbReference type="HOGENOM" id="CLU_096410_3_0_9"/>
<dbReference type="Proteomes" id="UP000000818">
    <property type="component" value="Chromosome"/>
</dbReference>
<dbReference type="GO" id="GO:0005886">
    <property type="term" value="C:plasma membrane"/>
    <property type="evidence" value="ECO:0007669"/>
    <property type="project" value="UniProtKB-SubCell"/>
</dbReference>
<dbReference type="GO" id="GO:0005384">
    <property type="term" value="F:manganese ion transmembrane transporter activity"/>
    <property type="evidence" value="ECO:0007669"/>
    <property type="project" value="UniProtKB-UniRule"/>
</dbReference>
<dbReference type="HAMAP" id="MF_01521">
    <property type="entry name" value="MntP_pump"/>
    <property type="match status" value="1"/>
</dbReference>
<dbReference type="InterPro" id="IPR003810">
    <property type="entry name" value="Mntp/YtaF"/>
</dbReference>
<dbReference type="InterPro" id="IPR022929">
    <property type="entry name" value="Put_MntP"/>
</dbReference>
<dbReference type="PANTHER" id="PTHR35529">
    <property type="entry name" value="MANGANESE EFFLUX PUMP MNTP-RELATED"/>
    <property type="match status" value="1"/>
</dbReference>
<dbReference type="PANTHER" id="PTHR35529:SF1">
    <property type="entry name" value="MANGANESE EFFLUX PUMP MNTP-RELATED"/>
    <property type="match status" value="1"/>
</dbReference>
<dbReference type="Pfam" id="PF02659">
    <property type="entry name" value="Mntp"/>
    <property type="match status" value="1"/>
</dbReference>
<sequence>MSILSIVLTGFGLAMDAFAVSVAKGITLTRVKAKDALKVALFFGGFQALMPLIGWGAGRYFADYIKAFDHWIAFILLSFIGGKMIFEALKEDDEEKAEVAVSMEVSKNKEREFANMKRKEELSAKNLTVLAIATSIDALAVGVSFAFLGISIVQTIIIIGIITFVLCFLGVIIGEKLGDIFKNYAEIVGGVILILIGINILLEHTGIIEKLFS</sequence>
<protein>
    <recommendedName>
        <fullName evidence="1">Putative manganese efflux pump MntP</fullName>
    </recommendedName>
</protein>